<evidence type="ECO:0000255" key="1">
    <source>
        <dbReference type="HAMAP-Rule" id="MF_00195"/>
    </source>
</evidence>
<evidence type="ECO:0000256" key="2">
    <source>
        <dbReference type="SAM" id="MobiDB-lite"/>
    </source>
</evidence>
<sequence length="488" mass="54624">MIPVVALVGRPNVGKSTLFNRLTRTRDALVADYPGLTRDRKYGRAHLSGYEFIVVDTGGIDGTEEGIETHMAEQSMAAIEEADVVLFLTDARAGLTAADQAISEHLRRREKTTFVVANKVDGIDADSACAEFWALGLGEVYQMAAAQGRGVTNMIEYALAPYAEALGLNRDGDDEEEKEEREYTEEEAEAEQTRLQDLPIKLAVIGKPNVGKSTLTNRILGEERVVVYDAPGTTRDSIYIPMERDGREYVLIDTAGVRRRSKVNETVEKFSVIKTLKAVEDCNVVLLIVDAREGIAEQDLGLLGFALNAGRALVIAVNKWDGIDQDIKDRVKSELDRRLGFIDFARIHFISALHGTGVGHLFESVQEAYESATRRVSTSMLTRIMQMAQDDHQPPMVNGRRVKLKYAHAGGYNPPIVVVHGNQVKKLPDSYKRFMMNYYRRSLKVMGTPIQVRFQDGDNPFEGMNTKKLTVSQERRRKRMMTHIKDKK</sequence>
<protein>
    <recommendedName>
        <fullName evidence="1">GTPase Der</fullName>
    </recommendedName>
    <alternativeName>
        <fullName evidence="1">GTP-binding protein EngA</fullName>
    </alternativeName>
</protein>
<dbReference type="EMBL" id="CP000961">
    <property type="protein sequence ID" value="ACA85836.1"/>
    <property type="molecule type" value="Genomic_DNA"/>
</dbReference>
<dbReference type="RefSeq" id="WP_012324182.1">
    <property type="nucleotide sequence ID" value="NC_010506.1"/>
</dbReference>
<dbReference type="SMR" id="B1KLB1"/>
<dbReference type="STRING" id="392500.Swoo_1548"/>
<dbReference type="KEGG" id="swd:Swoo_1548"/>
<dbReference type="eggNOG" id="COG1160">
    <property type="taxonomic scope" value="Bacteria"/>
</dbReference>
<dbReference type="HOGENOM" id="CLU_016077_6_2_6"/>
<dbReference type="Proteomes" id="UP000002168">
    <property type="component" value="Chromosome"/>
</dbReference>
<dbReference type="GO" id="GO:0005525">
    <property type="term" value="F:GTP binding"/>
    <property type="evidence" value="ECO:0007669"/>
    <property type="project" value="UniProtKB-UniRule"/>
</dbReference>
<dbReference type="GO" id="GO:0043022">
    <property type="term" value="F:ribosome binding"/>
    <property type="evidence" value="ECO:0007669"/>
    <property type="project" value="TreeGrafter"/>
</dbReference>
<dbReference type="GO" id="GO:0042254">
    <property type="term" value="P:ribosome biogenesis"/>
    <property type="evidence" value="ECO:0007669"/>
    <property type="project" value="UniProtKB-KW"/>
</dbReference>
<dbReference type="CDD" id="cd01894">
    <property type="entry name" value="EngA1"/>
    <property type="match status" value="1"/>
</dbReference>
<dbReference type="CDD" id="cd01895">
    <property type="entry name" value="EngA2"/>
    <property type="match status" value="1"/>
</dbReference>
<dbReference type="FunFam" id="3.30.300.20:FF:000004">
    <property type="entry name" value="GTPase Der"/>
    <property type="match status" value="1"/>
</dbReference>
<dbReference type="FunFam" id="3.40.50.300:FF:000040">
    <property type="entry name" value="GTPase Der"/>
    <property type="match status" value="1"/>
</dbReference>
<dbReference type="FunFam" id="3.40.50.300:FF:000057">
    <property type="entry name" value="GTPase Der"/>
    <property type="match status" value="1"/>
</dbReference>
<dbReference type="Gene3D" id="3.30.300.20">
    <property type="match status" value="1"/>
</dbReference>
<dbReference type="Gene3D" id="3.40.50.300">
    <property type="entry name" value="P-loop containing nucleotide triphosphate hydrolases"/>
    <property type="match status" value="2"/>
</dbReference>
<dbReference type="HAMAP" id="MF_00195">
    <property type="entry name" value="GTPase_Der"/>
    <property type="match status" value="1"/>
</dbReference>
<dbReference type="InterPro" id="IPR031166">
    <property type="entry name" value="G_ENGA"/>
</dbReference>
<dbReference type="InterPro" id="IPR006073">
    <property type="entry name" value="GTP-bd"/>
</dbReference>
<dbReference type="InterPro" id="IPR016484">
    <property type="entry name" value="GTPase_Der"/>
</dbReference>
<dbReference type="InterPro" id="IPR032859">
    <property type="entry name" value="KH_dom-like"/>
</dbReference>
<dbReference type="InterPro" id="IPR015946">
    <property type="entry name" value="KH_dom-like_a/b"/>
</dbReference>
<dbReference type="InterPro" id="IPR027417">
    <property type="entry name" value="P-loop_NTPase"/>
</dbReference>
<dbReference type="InterPro" id="IPR005225">
    <property type="entry name" value="Small_GTP-bd"/>
</dbReference>
<dbReference type="NCBIfam" id="TIGR03594">
    <property type="entry name" value="GTPase_EngA"/>
    <property type="match status" value="1"/>
</dbReference>
<dbReference type="NCBIfam" id="TIGR00231">
    <property type="entry name" value="small_GTP"/>
    <property type="match status" value="2"/>
</dbReference>
<dbReference type="PANTHER" id="PTHR43834">
    <property type="entry name" value="GTPASE DER"/>
    <property type="match status" value="1"/>
</dbReference>
<dbReference type="PANTHER" id="PTHR43834:SF6">
    <property type="entry name" value="GTPASE DER"/>
    <property type="match status" value="1"/>
</dbReference>
<dbReference type="Pfam" id="PF14714">
    <property type="entry name" value="KH_dom-like"/>
    <property type="match status" value="1"/>
</dbReference>
<dbReference type="Pfam" id="PF01926">
    <property type="entry name" value="MMR_HSR1"/>
    <property type="match status" value="2"/>
</dbReference>
<dbReference type="PIRSF" id="PIRSF006485">
    <property type="entry name" value="GTP-binding_EngA"/>
    <property type="match status" value="1"/>
</dbReference>
<dbReference type="PRINTS" id="PR00326">
    <property type="entry name" value="GTP1OBG"/>
</dbReference>
<dbReference type="SUPFAM" id="SSF52540">
    <property type="entry name" value="P-loop containing nucleoside triphosphate hydrolases"/>
    <property type="match status" value="2"/>
</dbReference>
<dbReference type="PROSITE" id="PS51712">
    <property type="entry name" value="G_ENGA"/>
    <property type="match status" value="2"/>
</dbReference>
<accession>B1KLB1</accession>
<name>DER_SHEWM</name>
<keyword id="KW-0342">GTP-binding</keyword>
<keyword id="KW-0547">Nucleotide-binding</keyword>
<keyword id="KW-1185">Reference proteome</keyword>
<keyword id="KW-0677">Repeat</keyword>
<keyword id="KW-0690">Ribosome biogenesis</keyword>
<organism>
    <name type="scientific">Shewanella woodyi (strain ATCC 51908 / MS32)</name>
    <dbReference type="NCBI Taxonomy" id="392500"/>
    <lineage>
        <taxon>Bacteria</taxon>
        <taxon>Pseudomonadati</taxon>
        <taxon>Pseudomonadota</taxon>
        <taxon>Gammaproteobacteria</taxon>
        <taxon>Alteromonadales</taxon>
        <taxon>Shewanellaceae</taxon>
        <taxon>Shewanella</taxon>
    </lineage>
</organism>
<proteinExistence type="inferred from homology"/>
<gene>
    <name evidence="1" type="primary">der</name>
    <name type="synonym">engA</name>
    <name type="ordered locus">Swoo_1548</name>
</gene>
<comment type="function">
    <text evidence="1">GTPase that plays an essential role in the late steps of ribosome biogenesis.</text>
</comment>
<comment type="subunit">
    <text evidence="1">Associates with the 50S ribosomal subunit.</text>
</comment>
<comment type="similarity">
    <text evidence="1">Belongs to the TRAFAC class TrmE-Era-EngA-EngB-Septin-like GTPase superfamily. EngA (Der) GTPase family.</text>
</comment>
<reference key="1">
    <citation type="submission" date="2008-02" db="EMBL/GenBank/DDBJ databases">
        <title>Complete sequence of Shewanella woodyi ATCC 51908.</title>
        <authorList>
            <consortium name="US DOE Joint Genome Institute"/>
            <person name="Copeland A."/>
            <person name="Lucas S."/>
            <person name="Lapidus A."/>
            <person name="Glavina del Rio T."/>
            <person name="Dalin E."/>
            <person name="Tice H."/>
            <person name="Bruce D."/>
            <person name="Goodwin L."/>
            <person name="Pitluck S."/>
            <person name="Sims D."/>
            <person name="Brettin T."/>
            <person name="Detter J.C."/>
            <person name="Han C."/>
            <person name="Kuske C.R."/>
            <person name="Schmutz J."/>
            <person name="Larimer F."/>
            <person name="Land M."/>
            <person name="Hauser L."/>
            <person name="Kyrpides N."/>
            <person name="Lykidis A."/>
            <person name="Zhao J.-S."/>
            <person name="Richardson P."/>
        </authorList>
    </citation>
    <scope>NUCLEOTIDE SEQUENCE [LARGE SCALE GENOMIC DNA]</scope>
    <source>
        <strain>ATCC 51908 / MS32</strain>
    </source>
</reference>
<feature type="chain" id="PRO_1000099160" description="GTPase Der">
    <location>
        <begin position="1"/>
        <end position="488"/>
    </location>
</feature>
<feature type="domain" description="EngA-type G 1">
    <location>
        <begin position="3"/>
        <end position="166"/>
    </location>
</feature>
<feature type="domain" description="EngA-type G 2">
    <location>
        <begin position="200"/>
        <end position="373"/>
    </location>
</feature>
<feature type="domain" description="KH-like" evidence="1">
    <location>
        <begin position="374"/>
        <end position="458"/>
    </location>
</feature>
<feature type="region of interest" description="Disordered" evidence="2">
    <location>
        <begin position="168"/>
        <end position="192"/>
    </location>
</feature>
<feature type="compositionally biased region" description="Acidic residues" evidence="2">
    <location>
        <begin position="172"/>
        <end position="190"/>
    </location>
</feature>
<feature type="binding site" evidence="1">
    <location>
        <begin position="9"/>
        <end position="16"/>
    </location>
    <ligand>
        <name>GTP</name>
        <dbReference type="ChEBI" id="CHEBI:37565"/>
        <label>1</label>
    </ligand>
</feature>
<feature type="binding site" evidence="1">
    <location>
        <begin position="56"/>
        <end position="60"/>
    </location>
    <ligand>
        <name>GTP</name>
        <dbReference type="ChEBI" id="CHEBI:37565"/>
        <label>1</label>
    </ligand>
</feature>
<feature type="binding site" evidence="1">
    <location>
        <begin position="118"/>
        <end position="121"/>
    </location>
    <ligand>
        <name>GTP</name>
        <dbReference type="ChEBI" id="CHEBI:37565"/>
        <label>1</label>
    </ligand>
</feature>
<feature type="binding site" evidence="1">
    <location>
        <begin position="206"/>
        <end position="213"/>
    </location>
    <ligand>
        <name>GTP</name>
        <dbReference type="ChEBI" id="CHEBI:37565"/>
        <label>2</label>
    </ligand>
</feature>
<feature type="binding site" evidence="1">
    <location>
        <begin position="253"/>
        <end position="257"/>
    </location>
    <ligand>
        <name>GTP</name>
        <dbReference type="ChEBI" id="CHEBI:37565"/>
        <label>2</label>
    </ligand>
</feature>
<feature type="binding site" evidence="1">
    <location>
        <begin position="318"/>
        <end position="321"/>
    </location>
    <ligand>
        <name>GTP</name>
        <dbReference type="ChEBI" id="CHEBI:37565"/>
        <label>2</label>
    </ligand>
</feature>